<evidence type="ECO:0000250" key="1"/>
<evidence type="ECO:0000305" key="2"/>
<keyword id="KW-0963">Cytoplasm</keyword>
<keyword id="KW-0489">Methyltransferase</keyword>
<keyword id="KW-0698">rRNA processing</keyword>
<keyword id="KW-0949">S-adenosyl-L-methionine</keyword>
<keyword id="KW-0808">Transferase</keyword>
<comment type="function">
    <text evidence="1">Specifically methylates the pseudouridine at position 1915 (m3Psi1915) in 23S rRNA.</text>
</comment>
<comment type="catalytic activity">
    <reaction>
        <text>pseudouridine(1915) in 23S rRNA + S-adenosyl-L-methionine = N(3)-methylpseudouridine(1915) in 23S rRNA + S-adenosyl-L-homocysteine + H(+)</text>
        <dbReference type="Rhea" id="RHEA:42752"/>
        <dbReference type="Rhea" id="RHEA-COMP:10221"/>
        <dbReference type="Rhea" id="RHEA-COMP:10222"/>
        <dbReference type="ChEBI" id="CHEBI:15378"/>
        <dbReference type="ChEBI" id="CHEBI:57856"/>
        <dbReference type="ChEBI" id="CHEBI:59789"/>
        <dbReference type="ChEBI" id="CHEBI:65314"/>
        <dbReference type="ChEBI" id="CHEBI:74486"/>
        <dbReference type="EC" id="2.1.1.177"/>
    </reaction>
</comment>
<comment type="subunit">
    <text evidence="1">Homodimer.</text>
</comment>
<comment type="subcellular location">
    <subcellularLocation>
        <location evidence="2">Cytoplasm</location>
    </subcellularLocation>
</comment>
<comment type="similarity">
    <text evidence="2">Belongs to the RNA methyltransferase RlmH family.</text>
</comment>
<comment type="caution">
    <text evidence="2">Could be the product of a pseudogene. The N-terminus is much shorter than in related proteins.</text>
</comment>
<reference key="1">
    <citation type="journal article" date="2006" name="Genome Res.">
        <title>Skewed genomic variability in strains of the toxigenic bacterial pathogen, Clostridium perfringens.</title>
        <authorList>
            <person name="Myers G.S.A."/>
            <person name="Rasko D.A."/>
            <person name="Cheung J.K."/>
            <person name="Ravel J."/>
            <person name="Seshadri R."/>
            <person name="DeBoy R.T."/>
            <person name="Ren Q."/>
            <person name="Varga J."/>
            <person name="Awad M.M."/>
            <person name="Brinkac L.M."/>
            <person name="Daugherty S.C."/>
            <person name="Haft D.H."/>
            <person name="Dodson R.J."/>
            <person name="Madupu R."/>
            <person name="Nelson W.C."/>
            <person name="Rosovitz M.J."/>
            <person name="Sullivan S.A."/>
            <person name="Khouri H."/>
            <person name="Dimitrov G.I."/>
            <person name="Watkins K.L."/>
            <person name="Mulligan S."/>
            <person name="Benton J."/>
            <person name="Radune D."/>
            <person name="Fisher D.J."/>
            <person name="Atkins H.S."/>
            <person name="Hiscox T."/>
            <person name="Jost B.H."/>
            <person name="Billington S.J."/>
            <person name="Songer J.G."/>
            <person name="McClane B.A."/>
            <person name="Titball R.W."/>
            <person name="Rood J.I."/>
            <person name="Melville S.B."/>
            <person name="Paulsen I.T."/>
        </authorList>
    </citation>
    <scope>NUCLEOTIDE SEQUENCE [LARGE SCALE GENOMIC DNA]</scope>
    <source>
        <strain>SM101 / Type A</strain>
    </source>
</reference>
<name>RLMH2_CLOPS</name>
<protein>
    <recommendedName>
        <fullName>Putative ribosomal RNA large subunit methyltransferase H 2</fullName>
        <ecNumber>2.1.1.177</ecNumber>
    </recommendedName>
    <alternativeName>
        <fullName>23S rRNA (pseudouridine1915-N3)-methyltransferase</fullName>
    </alternativeName>
    <alternativeName>
        <fullName>23S rRNA m3Psi1915 methyltransferase 2</fullName>
    </alternativeName>
    <alternativeName>
        <fullName>rRNA (pseudouridine-N3-)-methyltransferase RlmH 2</fullName>
    </alternativeName>
</protein>
<organism>
    <name type="scientific">Clostridium perfringens (strain SM101 / Type A)</name>
    <dbReference type="NCBI Taxonomy" id="289380"/>
    <lineage>
        <taxon>Bacteria</taxon>
        <taxon>Bacillati</taxon>
        <taxon>Bacillota</taxon>
        <taxon>Clostridia</taxon>
        <taxon>Eubacteriales</taxon>
        <taxon>Clostridiaceae</taxon>
        <taxon>Clostridium</taxon>
    </lineage>
</organism>
<sequence length="84" mass="9792">MDLNAKQMTSEEFSKLIENQGVMGKSNITFVIGGSLGLSQAVIKRENYKVCFSKMTFPHQLFRIMLLEQVYRAFRIMKNEPYHK</sequence>
<gene>
    <name type="primary">rlmH2</name>
    <name type="ordered locus">CPR_2599</name>
</gene>
<feature type="chain" id="PRO_0000366583" description="Putative ribosomal RNA large subunit methyltransferase H 2">
    <location>
        <begin position="1"/>
        <end position="84"/>
    </location>
</feature>
<feature type="binding site" evidence="1">
    <location>
        <position position="33"/>
    </location>
    <ligand>
        <name>S-adenosyl-L-methionine</name>
        <dbReference type="ChEBI" id="CHEBI:59789"/>
    </ligand>
</feature>
<feature type="binding site" evidence="1">
    <location>
        <begin position="52"/>
        <end position="57"/>
    </location>
    <ligand>
        <name>S-adenosyl-L-methionine</name>
        <dbReference type="ChEBI" id="CHEBI:59789"/>
    </ligand>
</feature>
<accession>Q0SPW1</accession>
<proteinExistence type="uncertain"/>
<dbReference type="EC" id="2.1.1.177"/>
<dbReference type="EMBL" id="CP000312">
    <property type="protein sequence ID" value="ABG86268.1"/>
    <property type="molecule type" value="Genomic_DNA"/>
</dbReference>
<dbReference type="SMR" id="Q0SPW1"/>
<dbReference type="KEGG" id="cpr:CPR_2599"/>
<dbReference type="Proteomes" id="UP000001824">
    <property type="component" value="Chromosome"/>
</dbReference>
<dbReference type="GO" id="GO:0005737">
    <property type="term" value="C:cytoplasm"/>
    <property type="evidence" value="ECO:0007669"/>
    <property type="project" value="UniProtKB-SubCell"/>
</dbReference>
<dbReference type="GO" id="GO:0008168">
    <property type="term" value="F:methyltransferase activity"/>
    <property type="evidence" value="ECO:0007669"/>
    <property type="project" value="UniProtKB-KW"/>
</dbReference>
<dbReference type="GO" id="GO:0032259">
    <property type="term" value="P:methylation"/>
    <property type="evidence" value="ECO:0007669"/>
    <property type="project" value="UniProtKB-KW"/>
</dbReference>
<dbReference type="GO" id="GO:0006364">
    <property type="term" value="P:rRNA processing"/>
    <property type="evidence" value="ECO:0007669"/>
    <property type="project" value="UniProtKB-KW"/>
</dbReference>
<dbReference type="CDD" id="cd18081">
    <property type="entry name" value="RlmH-like"/>
    <property type="match status" value="1"/>
</dbReference>
<dbReference type="Gene3D" id="3.40.1280.10">
    <property type="match status" value="1"/>
</dbReference>
<dbReference type="InterPro" id="IPR029028">
    <property type="entry name" value="Alpha/beta_knot_MTases"/>
</dbReference>
<dbReference type="InterPro" id="IPR003742">
    <property type="entry name" value="RlmH-like"/>
</dbReference>
<dbReference type="InterPro" id="IPR029026">
    <property type="entry name" value="tRNA_m1G_MTases_N"/>
</dbReference>
<dbReference type="PANTHER" id="PTHR33603">
    <property type="entry name" value="METHYLTRANSFERASE"/>
    <property type="match status" value="1"/>
</dbReference>
<dbReference type="PANTHER" id="PTHR33603:SF1">
    <property type="entry name" value="RIBOSOMAL RNA LARGE SUBUNIT METHYLTRANSFERASE H"/>
    <property type="match status" value="1"/>
</dbReference>
<dbReference type="Pfam" id="PF02590">
    <property type="entry name" value="SPOUT_MTase"/>
    <property type="match status" value="1"/>
</dbReference>
<dbReference type="SUPFAM" id="SSF75217">
    <property type="entry name" value="alpha/beta knot"/>
    <property type="match status" value="1"/>
</dbReference>